<accession>Q701P2</accession>
<comment type="function">
    <text>Catalyzes three successive oxidations of the 4-methyl group of ent-kaurene giving kaurenoic acid, a key step in gibberellin (GA) biosynthesis.</text>
</comment>
<comment type="catalytic activity">
    <reaction evidence="2">
        <text>ent-kaur-16-ene + 3 reduced [NADPH--hemoprotein reductase] + 3 O2 = ent-kaur-16-en-19-oate + 3 oxidized [NADPH--hemoprotein reductase] + 4 H2O + 4 H(+)</text>
        <dbReference type="Rhea" id="RHEA:32323"/>
        <dbReference type="Rhea" id="RHEA-COMP:11964"/>
        <dbReference type="Rhea" id="RHEA-COMP:11965"/>
        <dbReference type="ChEBI" id="CHEBI:15377"/>
        <dbReference type="ChEBI" id="CHEBI:15378"/>
        <dbReference type="ChEBI" id="CHEBI:15379"/>
        <dbReference type="ChEBI" id="CHEBI:15415"/>
        <dbReference type="ChEBI" id="CHEBI:57297"/>
        <dbReference type="ChEBI" id="CHEBI:57618"/>
        <dbReference type="ChEBI" id="CHEBI:58210"/>
        <dbReference type="EC" id="1.14.14.86"/>
    </reaction>
</comment>
<comment type="cofactor">
    <cofactor evidence="1">
        <name>heme</name>
        <dbReference type="ChEBI" id="CHEBI:30413"/>
    </cofactor>
</comment>
<comment type="pathway">
    <text>Plant hormone biosynthesis; gibberellin biosynthesis.</text>
</comment>
<comment type="subcellular location">
    <subcellularLocation>
        <location evidence="4">Membrane</location>
        <topology evidence="4">Single-pass membrane protein</topology>
    </subcellularLocation>
</comment>
<comment type="miscellaneous">
    <text>This protein is poorly expressed and has no detectable ent-kaurene oxidase activity in this species. Consequently, this species does not produce gibberellins.</text>
</comment>
<comment type="similarity">
    <text evidence="4">Belongs to the cytochrome P450 family.</text>
</comment>
<dbReference type="EC" id="1.14.14.86" evidence="2"/>
<dbReference type="EMBL" id="AJ628021">
    <property type="protein sequence ID" value="CAF31352.1"/>
    <property type="molecule type" value="Genomic_DNA"/>
</dbReference>
<dbReference type="SMR" id="Q701P2"/>
<dbReference type="BRENDA" id="1.14.14.86">
    <property type="organism ID" value="7521"/>
</dbReference>
<dbReference type="UniPathway" id="UPA00390"/>
<dbReference type="GO" id="GO:0016020">
    <property type="term" value="C:membrane"/>
    <property type="evidence" value="ECO:0007669"/>
    <property type="project" value="UniProtKB-SubCell"/>
</dbReference>
<dbReference type="GO" id="GO:0052615">
    <property type="term" value="F:ent-kaurene oxidase activity"/>
    <property type="evidence" value="ECO:0007669"/>
    <property type="project" value="UniProtKB-EC"/>
</dbReference>
<dbReference type="GO" id="GO:0020037">
    <property type="term" value="F:heme binding"/>
    <property type="evidence" value="ECO:0007669"/>
    <property type="project" value="InterPro"/>
</dbReference>
<dbReference type="GO" id="GO:0005506">
    <property type="term" value="F:iron ion binding"/>
    <property type="evidence" value="ECO:0007669"/>
    <property type="project" value="InterPro"/>
</dbReference>
<dbReference type="GO" id="GO:0009686">
    <property type="term" value="P:gibberellin biosynthetic process"/>
    <property type="evidence" value="ECO:0007669"/>
    <property type="project" value="UniProtKB-UniPathway"/>
</dbReference>
<dbReference type="GO" id="GO:0019748">
    <property type="term" value="P:secondary metabolic process"/>
    <property type="evidence" value="ECO:0007669"/>
    <property type="project" value="UniProtKB-ARBA"/>
</dbReference>
<dbReference type="CDD" id="cd11041">
    <property type="entry name" value="CYP503A1-like"/>
    <property type="match status" value="1"/>
</dbReference>
<dbReference type="Gene3D" id="1.10.630.10">
    <property type="entry name" value="Cytochrome P450"/>
    <property type="match status" value="1"/>
</dbReference>
<dbReference type="InterPro" id="IPR001128">
    <property type="entry name" value="Cyt_P450"/>
</dbReference>
<dbReference type="InterPro" id="IPR002401">
    <property type="entry name" value="Cyt_P450_E_grp-I"/>
</dbReference>
<dbReference type="InterPro" id="IPR036396">
    <property type="entry name" value="Cyt_P450_sf"/>
</dbReference>
<dbReference type="PANTHER" id="PTHR46206">
    <property type="entry name" value="CYTOCHROME P450"/>
    <property type="match status" value="1"/>
</dbReference>
<dbReference type="PANTHER" id="PTHR46206:SF6">
    <property type="entry name" value="CYTOCHROME P450 MONOOXYGENASE AN1598-RELATED"/>
    <property type="match status" value="1"/>
</dbReference>
<dbReference type="Pfam" id="PF00067">
    <property type="entry name" value="p450"/>
    <property type="match status" value="1"/>
</dbReference>
<dbReference type="PRINTS" id="PR00463">
    <property type="entry name" value="EP450I"/>
</dbReference>
<dbReference type="PRINTS" id="PR00385">
    <property type="entry name" value="P450"/>
</dbReference>
<dbReference type="SUPFAM" id="SSF48264">
    <property type="entry name" value="Cytochrome P450"/>
    <property type="match status" value="1"/>
</dbReference>
<keyword id="KW-0349">Heme</keyword>
<keyword id="KW-0408">Iron</keyword>
<keyword id="KW-0472">Membrane</keyword>
<keyword id="KW-0479">Metal-binding</keyword>
<keyword id="KW-0503">Monooxygenase</keyword>
<keyword id="KW-0521">NADP</keyword>
<keyword id="KW-0560">Oxidoreductase</keyword>
<keyword id="KW-0812">Transmembrane</keyword>
<keyword id="KW-1133">Transmembrane helix</keyword>
<gene>
    <name type="primary">CYP503A1</name>
</gene>
<sequence>MNKSNSMNNTSLERLFQQLVLGLDGIPLMDVHWLIYVAFGAWLCSYVIHVLSSSSTVKVPVVGYRSVFEPTWLLRLRFVWEGGSIIGQGYNKFKDSIFQVRKLGTDIVIIPPNFIDEVRKLSQDKTRSVEPFINDFAGQYTRGMVFLQSDLQNRVIQQRLTPKLVSLTKVMKEELDYALTKEIPDMKDDEWVEVDISSIMVRLISRISARVFLGPEHCRNQEWLTNTAEYSESLFITGFILRVVPHILRPFIAPLLPSYRTLLRNVSSGRRVIGDIIRSQQGDGNEDILSWMRDAATGEEKQIDNIAQRMLILSLASIHTTAMTMTHAMYDLCARPEYIEPLRDEVKGVVDASGWDKTALNRLHRLDSFLKESQRFNPVFLLTFNRIYHQSMTLSDGTNLPSGTRIAVPSHAMLQDSAHVPGPTPPTEFDGFRYSKIRSDSNYAQKYLFSMTDSSNMAFGYGKYACPGRFYASNEMKLTLAILLLQFEFKLPDGKGRPRNITIDSDMIPDPRARLCVRKRSLRDE</sequence>
<protein>
    <recommendedName>
        <fullName>Ent-kaurene oxidase</fullName>
        <ecNumber evidence="2">1.14.14.86</ecNumber>
    </recommendedName>
    <alternativeName>
        <fullName>Cytochrome P450 503A1</fullName>
    </alternativeName>
    <alternativeName>
        <fullName>Cytochrome P450-4</fullName>
    </alternativeName>
</protein>
<proteinExistence type="evidence at protein level"/>
<name>KO1_GIBIN</name>
<reference key="1">
    <citation type="journal article" date="2005" name="Appl. Environ. Microbiol.">
        <title>Functional characterization of two cytochrome P450 monooxygenase genes, P450-1 and P450-4, of the gibberellic acid gene cluster in Fusarium proliferatum (Gibberella fujikuroi MP-D).</title>
        <authorList>
            <person name="Malonek S."/>
            <person name="Rojas M.C."/>
            <person name="Hedden P."/>
            <person name="Gaskin P."/>
            <person name="Hopkins P."/>
            <person name="Tudzynski B."/>
        </authorList>
    </citation>
    <scope>NUCLEOTIDE SEQUENCE [GENOMIC DNA]</scope>
    <source>
        <strain>D02945</strain>
    </source>
</reference>
<reference key="2">
    <citation type="journal article" date="2005" name="Appl. Environ. Microbiol.">
        <title>Restoration of gibberellin production in Fusarium proliferatum by functional complementation of enzymatic blocks.</title>
        <authorList>
            <person name="Malonek S."/>
            <person name="Rojas M.C."/>
            <person name="Hedden P."/>
            <person name="Hopkins P."/>
            <person name="Tudzynski B."/>
        </authorList>
    </citation>
    <scope>CHARACTERIZATION</scope>
</reference>
<organism>
    <name type="scientific">Gibberella intermedia</name>
    <name type="common">Bulb rot disease fungus</name>
    <name type="synonym">Fusarium proliferatum</name>
    <dbReference type="NCBI Taxonomy" id="948311"/>
    <lineage>
        <taxon>Eukaryota</taxon>
        <taxon>Fungi</taxon>
        <taxon>Dikarya</taxon>
        <taxon>Ascomycota</taxon>
        <taxon>Pezizomycotina</taxon>
        <taxon>Sordariomycetes</taxon>
        <taxon>Hypocreomycetidae</taxon>
        <taxon>Hypocreales</taxon>
        <taxon>Nectriaceae</taxon>
        <taxon>Fusarium</taxon>
        <taxon>Fusarium fujikuroi species complex</taxon>
    </lineage>
</organism>
<feature type="chain" id="PRO_0000052209" description="Ent-kaurene oxidase">
    <location>
        <begin position="1"/>
        <end position="525"/>
    </location>
</feature>
<feature type="transmembrane region" description="Helical" evidence="3">
    <location>
        <begin position="31"/>
        <end position="51"/>
    </location>
</feature>
<feature type="binding site" description="axial binding residue" evidence="1">
    <location>
        <position position="466"/>
    </location>
    <ligand>
        <name>heme</name>
        <dbReference type="ChEBI" id="CHEBI:30413"/>
    </ligand>
    <ligandPart>
        <name>Fe</name>
        <dbReference type="ChEBI" id="CHEBI:18248"/>
    </ligandPart>
</feature>
<evidence type="ECO:0000250" key="1"/>
<evidence type="ECO:0000250" key="2">
    <source>
        <dbReference type="UniProtKB" id="Q93ZB2"/>
    </source>
</evidence>
<evidence type="ECO:0000255" key="3"/>
<evidence type="ECO:0000305" key="4"/>